<name>TRUB_TREPA</name>
<proteinExistence type="inferred from homology"/>
<keyword id="KW-0413">Isomerase</keyword>
<keyword id="KW-1185">Reference proteome</keyword>
<keyword id="KW-0819">tRNA processing</keyword>
<dbReference type="EC" id="5.4.99.25" evidence="1"/>
<dbReference type="EMBL" id="AE000520">
    <property type="protein sequence ID" value="AAC26579.1"/>
    <property type="molecule type" value="Genomic_DNA"/>
</dbReference>
<dbReference type="PIR" id="F71269">
    <property type="entry name" value="F71269"/>
</dbReference>
<dbReference type="SMR" id="O83859"/>
<dbReference type="IntAct" id="O83859">
    <property type="interactions" value="1"/>
</dbReference>
<dbReference type="STRING" id="243276.TP_0889"/>
<dbReference type="EnsemblBacteria" id="AAC26579">
    <property type="protein sequence ID" value="AAC26579"/>
    <property type="gene ID" value="TP_0889"/>
</dbReference>
<dbReference type="KEGG" id="tpa:TP_0889"/>
<dbReference type="KEGG" id="tpw:TPANIC_0889"/>
<dbReference type="eggNOG" id="COG0130">
    <property type="taxonomic scope" value="Bacteria"/>
</dbReference>
<dbReference type="HOGENOM" id="CLU_032087_0_0_12"/>
<dbReference type="OrthoDB" id="9802309at2"/>
<dbReference type="Proteomes" id="UP000000811">
    <property type="component" value="Chromosome"/>
</dbReference>
<dbReference type="GO" id="GO:0003723">
    <property type="term" value="F:RNA binding"/>
    <property type="evidence" value="ECO:0007669"/>
    <property type="project" value="InterPro"/>
</dbReference>
<dbReference type="GO" id="GO:0160148">
    <property type="term" value="F:tRNA pseudouridine(55) synthase activity"/>
    <property type="evidence" value="ECO:0007669"/>
    <property type="project" value="UniProtKB-EC"/>
</dbReference>
<dbReference type="GO" id="GO:1990481">
    <property type="term" value="P:mRNA pseudouridine synthesis"/>
    <property type="evidence" value="ECO:0007669"/>
    <property type="project" value="TreeGrafter"/>
</dbReference>
<dbReference type="GO" id="GO:0031119">
    <property type="term" value="P:tRNA pseudouridine synthesis"/>
    <property type="evidence" value="ECO:0007669"/>
    <property type="project" value="UniProtKB-UniRule"/>
</dbReference>
<dbReference type="Gene3D" id="3.30.2350.10">
    <property type="entry name" value="Pseudouridine synthase"/>
    <property type="match status" value="1"/>
</dbReference>
<dbReference type="HAMAP" id="MF_01080">
    <property type="entry name" value="TruB_bact"/>
    <property type="match status" value="1"/>
</dbReference>
<dbReference type="InterPro" id="IPR020103">
    <property type="entry name" value="PsdUridine_synth_cat_dom_sf"/>
</dbReference>
<dbReference type="InterPro" id="IPR002501">
    <property type="entry name" value="PsdUridine_synth_N"/>
</dbReference>
<dbReference type="InterPro" id="IPR014780">
    <property type="entry name" value="tRNA_psdUridine_synth_TruB"/>
</dbReference>
<dbReference type="InterPro" id="IPR032819">
    <property type="entry name" value="TruB_C"/>
</dbReference>
<dbReference type="NCBIfam" id="TIGR00431">
    <property type="entry name" value="TruB"/>
    <property type="match status" value="1"/>
</dbReference>
<dbReference type="PANTHER" id="PTHR13767:SF2">
    <property type="entry name" value="PSEUDOURIDYLATE SYNTHASE TRUB1"/>
    <property type="match status" value="1"/>
</dbReference>
<dbReference type="PANTHER" id="PTHR13767">
    <property type="entry name" value="TRNA-PSEUDOURIDINE SYNTHASE"/>
    <property type="match status" value="1"/>
</dbReference>
<dbReference type="Pfam" id="PF16198">
    <property type="entry name" value="TruB_C_2"/>
    <property type="match status" value="1"/>
</dbReference>
<dbReference type="Pfam" id="PF01509">
    <property type="entry name" value="TruB_N"/>
    <property type="match status" value="1"/>
</dbReference>
<dbReference type="SUPFAM" id="SSF55120">
    <property type="entry name" value="Pseudouridine synthase"/>
    <property type="match status" value="1"/>
</dbReference>
<sequence>MCRLSMPDAIVPFAKVSGLTSFAALAQVRRLLGVKKVGHTGTLDRFADGLLLLLVGGFTKLAPVMTRLEKSYEARIQFGVQTDTLDPEGAVVRCSLFPTFARVRAALPHFTGSIDQVPPEYSALKFGGVRASDRVRRGEAVCMKARRVFVFDLQVLGCEADLGEFKKTQAGRGAAIADLDLTRVRAVTLYVRCSAGFYVRALARDIAAACGSCAYVSHLRRTRIGPFDLAQAAGVSRLGSWTWGKERASCGAACFDVGAPPPPSSGGVATDSVSFGCEDLTVREIKQAVVSCDVDFANRIGLTACSVHAQYASRFLHGERIRACWFQSFGTRRPGERALVFSEGRCLGLIRKAANGFSYDAVFCTE</sequence>
<evidence type="ECO:0000255" key="1">
    <source>
        <dbReference type="HAMAP-Rule" id="MF_01080"/>
    </source>
</evidence>
<gene>
    <name evidence="1" type="primary">truB</name>
    <name type="ordered locus">TP_0889</name>
</gene>
<accession>O83859</accession>
<organism>
    <name type="scientific">Treponema pallidum (strain Nichols)</name>
    <dbReference type="NCBI Taxonomy" id="243276"/>
    <lineage>
        <taxon>Bacteria</taxon>
        <taxon>Pseudomonadati</taxon>
        <taxon>Spirochaetota</taxon>
        <taxon>Spirochaetia</taxon>
        <taxon>Spirochaetales</taxon>
        <taxon>Treponemataceae</taxon>
        <taxon>Treponema</taxon>
    </lineage>
</organism>
<protein>
    <recommendedName>
        <fullName evidence="1">tRNA pseudouridine synthase B</fullName>
        <ecNumber evidence="1">5.4.99.25</ecNumber>
    </recommendedName>
    <alternativeName>
        <fullName evidence="1">tRNA pseudouridine(55) synthase</fullName>
        <shortName evidence="1">Psi55 synthase</shortName>
    </alternativeName>
    <alternativeName>
        <fullName evidence="1">tRNA pseudouridylate synthase</fullName>
    </alternativeName>
    <alternativeName>
        <fullName evidence="1">tRNA-uridine isomerase</fullName>
    </alternativeName>
</protein>
<reference key="1">
    <citation type="journal article" date="1998" name="Science">
        <title>Complete genome sequence of Treponema pallidum, the syphilis spirochete.</title>
        <authorList>
            <person name="Fraser C.M."/>
            <person name="Norris S.J."/>
            <person name="Weinstock G.M."/>
            <person name="White O."/>
            <person name="Sutton G.G."/>
            <person name="Dodson R.J."/>
            <person name="Gwinn M.L."/>
            <person name="Hickey E.K."/>
            <person name="Clayton R.A."/>
            <person name="Ketchum K.A."/>
            <person name="Sodergren E."/>
            <person name="Hardham J.M."/>
            <person name="McLeod M.P."/>
            <person name="Salzberg S.L."/>
            <person name="Peterson J.D."/>
            <person name="Khalak H.G."/>
            <person name="Richardson D.L."/>
            <person name="Howell J.K."/>
            <person name="Chidambaram M."/>
            <person name="Utterback T.R."/>
            <person name="McDonald L.A."/>
            <person name="Artiach P."/>
            <person name="Bowman C."/>
            <person name="Cotton M.D."/>
            <person name="Fujii C."/>
            <person name="Garland S.A."/>
            <person name="Hatch B."/>
            <person name="Horst K."/>
            <person name="Roberts K.M."/>
            <person name="Sandusky M."/>
            <person name="Weidman J.F."/>
            <person name="Smith H.O."/>
            <person name="Venter J.C."/>
        </authorList>
    </citation>
    <scope>NUCLEOTIDE SEQUENCE [LARGE SCALE GENOMIC DNA]</scope>
    <source>
        <strain>Nichols</strain>
    </source>
</reference>
<feature type="chain" id="PRO_0000121934" description="tRNA pseudouridine synthase B">
    <location>
        <begin position="1"/>
        <end position="366"/>
    </location>
</feature>
<feature type="active site" description="Nucleophile" evidence="1">
    <location>
        <position position="44"/>
    </location>
</feature>
<comment type="function">
    <text evidence="1">Responsible for synthesis of pseudouridine from uracil-55 in the psi GC loop of transfer RNAs.</text>
</comment>
<comment type="catalytic activity">
    <reaction evidence="1">
        <text>uridine(55) in tRNA = pseudouridine(55) in tRNA</text>
        <dbReference type="Rhea" id="RHEA:42532"/>
        <dbReference type="Rhea" id="RHEA-COMP:10101"/>
        <dbReference type="Rhea" id="RHEA-COMP:10102"/>
        <dbReference type="ChEBI" id="CHEBI:65314"/>
        <dbReference type="ChEBI" id="CHEBI:65315"/>
        <dbReference type="EC" id="5.4.99.25"/>
    </reaction>
</comment>
<comment type="similarity">
    <text evidence="1">Belongs to the pseudouridine synthase TruB family. Type 1 subfamily.</text>
</comment>